<gene>
    <name type="primary">DYNC1I2</name>
</gene>
<name>DC1I2_BOVIN</name>
<evidence type="ECO:0000250" key="1">
    <source>
        <dbReference type="UniProtKB" id="O88487"/>
    </source>
</evidence>
<evidence type="ECO:0000250" key="2">
    <source>
        <dbReference type="UniProtKB" id="Q13409"/>
    </source>
</evidence>
<evidence type="ECO:0000250" key="3">
    <source>
        <dbReference type="UniProtKB" id="Q62871"/>
    </source>
</evidence>
<evidence type="ECO:0000256" key="4">
    <source>
        <dbReference type="SAM" id="MobiDB-lite"/>
    </source>
</evidence>
<evidence type="ECO:0000269" key="5">
    <source>
    </source>
</evidence>
<evidence type="ECO:0000305" key="6"/>
<proteinExistence type="evidence at protein level"/>
<reference key="1">
    <citation type="submission" date="2006-08" db="EMBL/GenBank/DDBJ databases">
        <authorList>
            <consortium name="NIH - Mammalian Gene Collection (MGC) project"/>
        </authorList>
    </citation>
    <scope>NUCLEOTIDE SEQUENCE [LARGE SCALE MRNA]</scope>
    <source>
        <strain>Hereford</strain>
        <tissue>Fetal muscle</tissue>
    </source>
</reference>
<reference key="2">
    <citation type="journal article" date="2002" name="Protein Sci.">
        <title>Subunit organization in cytoplasmic dynein subcomplexes.</title>
        <authorList>
            <person name="King S.J."/>
            <person name="Bonilla M."/>
            <person name="Rodgers M.E."/>
            <person name="Schroer T.A."/>
        </authorList>
    </citation>
    <scope>IDENTIFICATION IN THE CYTOPLASMIC DYNEIN 1 COMPLEX</scope>
</reference>
<comment type="function">
    <text evidence="2 3">Acts as one of several non-catalytic accessory components of the cytoplasmic dynein 1 complex that are thought to be involved in linking dynein to cargos and to adapter proteins that regulate dynein function. Cytoplasmic dynein 1 acts as a motor for the intracellular retrograde motility of vesicles and organelles along microtubules (By similarity). The intermediate chains mediate the binding of dynein to dynactin via its 150 kDa component (p150-glued) DCTN1 (By similarity). Involved in membrane-transport, such as Golgi apparatus, late endosomes and lysosomes (By similarity).</text>
</comment>
<comment type="subunit">
    <text evidence="1 3 5">Homodimer (PubMed:11967380). The cytoplasmic dynein 1 complex consists of two catalytic heavy chains (HCs) and a number of non-catalytic subunits presented by intermediate chains (ICs), light intermediate chains (LICs) and light chains (LCs); the composition seems to vary in respect to the IC, LIC and LC composition (PubMed:11967380). The heavy chain homodimer serves as a scaffold for the probable homodimeric assembly of the respective non-catalytic subunits (PubMed:11967380). The ICs and LICs bind directly to the HC dimer and the LCs assemble on the IC dimer (PubMed:11967380). Interacts with DYNLT3. Interacts with DYNLT1. Interacts (dephosphorylated at Ser-84) with DCTN1 (By similarity). Interacts with BICD2. Interacts with SPEF2 (By similarity). Interacts with CFAP61 (By similarity).</text>
</comment>
<comment type="subcellular location">
    <subcellularLocation>
        <location evidence="2">Cytoplasm</location>
        <location evidence="2">Cytoskeleton</location>
    </subcellularLocation>
    <subcellularLocation>
        <location evidence="1">Cytoplasm</location>
    </subcellularLocation>
    <text evidence="1">Detected in the cytoplasm of pachytene spermatocytes. Localizes to the manchette in elongating spermatids.</text>
</comment>
<comment type="PTM">
    <text evidence="3">The phosphorylation status of Ser-84 appears to be involved in dynactin-dependent target binding.</text>
</comment>
<comment type="PTM">
    <text evidence="1">Pyrophosphorylation by 5-diphosphoinositol pentakisphosphate (5-IP7) promotes interaction with DCTN1. Serine pyrophosphorylation is achieved by Mg(2+)-dependent, but enzyme independent transfer of a beta-phosphate from a inositol pyrophosphate to a pre-phosphorylated serine residue.</text>
</comment>
<comment type="similarity">
    <text evidence="6">Belongs to the dynein intermediate chain family.</text>
</comment>
<dbReference type="EMBL" id="BC122627">
    <property type="protein sequence ID" value="AAI22628.1"/>
    <property type="molecule type" value="mRNA"/>
</dbReference>
<dbReference type="RefSeq" id="NP_001069351.1">
    <property type="nucleotide sequence ID" value="NM_001075883.1"/>
</dbReference>
<dbReference type="SMR" id="Q0III3"/>
<dbReference type="FunCoup" id="Q0III3">
    <property type="interactions" value="3371"/>
</dbReference>
<dbReference type="STRING" id="9913.ENSBTAP00000073452"/>
<dbReference type="PaxDb" id="9913-ENSBTAP00000003429"/>
<dbReference type="PeptideAtlas" id="Q0III3"/>
<dbReference type="GeneID" id="526329"/>
<dbReference type="KEGG" id="bta:526329"/>
<dbReference type="CTD" id="1781"/>
<dbReference type="eggNOG" id="KOG1587">
    <property type="taxonomic scope" value="Eukaryota"/>
</dbReference>
<dbReference type="InParanoid" id="Q0III3"/>
<dbReference type="OrthoDB" id="4189at2759"/>
<dbReference type="Proteomes" id="UP000009136">
    <property type="component" value="Unplaced"/>
</dbReference>
<dbReference type="GO" id="GO:0005737">
    <property type="term" value="C:cytoplasm"/>
    <property type="evidence" value="ECO:0007669"/>
    <property type="project" value="UniProtKB-SubCell"/>
</dbReference>
<dbReference type="GO" id="GO:0005868">
    <property type="term" value="C:cytoplasmic dynein complex"/>
    <property type="evidence" value="ECO:0000318"/>
    <property type="project" value="GO_Central"/>
</dbReference>
<dbReference type="GO" id="GO:0005874">
    <property type="term" value="C:microtubule"/>
    <property type="evidence" value="ECO:0007669"/>
    <property type="project" value="UniProtKB-KW"/>
</dbReference>
<dbReference type="GO" id="GO:0031982">
    <property type="term" value="C:vesicle"/>
    <property type="evidence" value="ECO:0000250"/>
    <property type="project" value="UniProtKB"/>
</dbReference>
<dbReference type="GO" id="GO:0045504">
    <property type="term" value="F:dynein heavy chain binding"/>
    <property type="evidence" value="ECO:0000318"/>
    <property type="project" value="GO_Central"/>
</dbReference>
<dbReference type="GO" id="GO:0045503">
    <property type="term" value="F:dynein light chain binding"/>
    <property type="evidence" value="ECO:0000318"/>
    <property type="project" value="GO_Central"/>
</dbReference>
<dbReference type="GO" id="GO:0010970">
    <property type="term" value="P:transport along microtubule"/>
    <property type="evidence" value="ECO:0000318"/>
    <property type="project" value="GO_Central"/>
</dbReference>
<dbReference type="FunFam" id="2.130.10.10:FF:000095">
    <property type="entry name" value="Cytoplasmic dynein 1 intermediate chain 2"/>
    <property type="match status" value="1"/>
</dbReference>
<dbReference type="FunFam" id="2.130.10.10:FF:000026">
    <property type="entry name" value="cytoplasmic dynein 1 intermediate chain 2 isoform X2"/>
    <property type="match status" value="1"/>
</dbReference>
<dbReference type="Gene3D" id="2.130.10.10">
    <property type="entry name" value="YVTN repeat-like/Quinoprotein amine dehydrogenase"/>
    <property type="match status" value="2"/>
</dbReference>
<dbReference type="InterPro" id="IPR025956">
    <property type="entry name" value="DYNC1I1/DYNC1I2"/>
</dbReference>
<dbReference type="InterPro" id="IPR050687">
    <property type="entry name" value="Dynein_IC"/>
</dbReference>
<dbReference type="InterPro" id="IPR015943">
    <property type="entry name" value="WD40/YVTN_repeat-like_dom_sf"/>
</dbReference>
<dbReference type="InterPro" id="IPR036322">
    <property type="entry name" value="WD40_repeat_dom_sf"/>
</dbReference>
<dbReference type="InterPro" id="IPR001680">
    <property type="entry name" value="WD40_rpt"/>
</dbReference>
<dbReference type="PANTHER" id="PTHR12442:SF37">
    <property type="entry name" value="CYTOPLASMIC DYNEIN 1 INTERMEDIATE CHAIN 2"/>
    <property type="match status" value="1"/>
</dbReference>
<dbReference type="PANTHER" id="PTHR12442">
    <property type="entry name" value="DYNEIN INTERMEDIATE CHAIN"/>
    <property type="match status" value="1"/>
</dbReference>
<dbReference type="Pfam" id="PF11540">
    <property type="entry name" value="Dynein_IC2"/>
    <property type="match status" value="1"/>
</dbReference>
<dbReference type="Pfam" id="PF00400">
    <property type="entry name" value="WD40"/>
    <property type="match status" value="1"/>
</dbReference>
<dbReference type="SMART" id="SM00320">
    <property type="entry name" value="WD40"/>
    <property type="match status" value="5"/>
</dbReference>
<dbReference type="SUPFAM" id="SSF50978">
    <property type="entry name" value="WD40 repeat-like"/>
    <property type="match status" value="1"/>
</dbReference>
<dbReference type="PROSITE" id="PS50082">
    <property type="entry name" value="WD_REPEATS_2"/>
    <property type="match status" value="1"/>
</dbReference>
<dbReference type="PROSITE" id="PS50294">
    <property type="entry name" value="WD_REPEATS_REGION"/>
    <property type="match status" value="1"/>
</dbReference>
<keyword id="KW-0007">Acetylation</keyword>
<keyword id="KW-0963">Cytoplasm</keyword>
<keyword id="KW-0206">Cytoskeleton</keyword>
<keyword id="KW-0243">Dynein</keyword>
<keyword id="KW-0493">Microtubule</keyword>
<keyword id="KW-0505">Motor protein</keyword>
<keyword id="KW-0597">Phosphoprotein</keyword>
<keyword id="KW-1185">Reference proteome</keyword>
<keyword id="KW-0677">Repeat</keyword>
<keyword id="KW-0813">Transport</keyword>
<keyword id="KW-0853">WD repeat</keyword>
<organism>
    <name type="scientific">Bos taurus</name>
    <name type="common">Bovine</name>
    <dbReference type="NCBI Taxonomy" id="9913"/>
    <lineage>
        <taxon>Eukaryota</taxon>
        <taxon>Metazoa</taxon>
        <taxon>Chordata</taxon>
        <taxon>Craniata</taxon>
        <taxon>Vertebrata</taxon>
        <taxon>Euteleostomi</taxon>
        <taxon>Mammalia</taxon>
        <taxon>Eutheria</taxon>
        <taxon>Laurasiatheria</taxon>
        <taxon>Artiodactyla</taxon>
        <taxon>Ruminantia</taxon>
        <taxon>Pecora</taxon>
        <taxon>Bovidae</taxon>
        <taxon>Bovinae</taxon>
        <taxon>Bos</taxon>
    </lineage>
</organism>
<feature type="initiator methionine" description="Removed" evidence="2">
    <location>
        <position position="1"/>
    </location>
</feature>
<feature type="chain" id="PRO_0000277462" description="Cytoplasmic dynein 1 intermediate chain 2">
    <location>
        <begin position="2"/>
        <end position="612"/>
    </location>
</feature>
<feature type="repeat" description="WD 1">
    <location>
        <begin position="251"/>
        <end position="300"/>
    </location>
</feature>
<feature type="repeat" description="WD 2">
    <location>
        <begin position="304"/>
        <end position="344"/>
    </location>
</feature>
<feature type="repeat" description="WD 3">
    <location>
        <begin position="353"/>
        <end position="394"/>
    </location>
</feature>
<feature type="repeat" description="WD 4">
    <location>
        <begin position="403"/>
        <end position="443"/>
    </location>
</feature>
<feature type="repeat" description="WD 5">
    <location>
        <begin position="448"/>
        <end position="493"/>
    </location>
</feature>
<feature type="repeat" description="WD 6">
    <location>
        <begin position="496"/>
        <end position="536"/>
    </location>
</feature>
<feature type="repeat" description="WD 7">
    <location>
        <begin position="542"/>
        <end position="581"/>
    </location>
</feature>
<feature type="region of interest" description="Disordered" evidence="4">
    <location>
        <begin position="1"/>
        <end position="117"/>
    </location>
</feature>
<feature type="region of interest" description="Disordered" evidence="4">
    <location>
        <begin position="129"/>
        <end position="188"/>
    </location>
</feature>
<feature type="compositionally biased region" description="Basic and acidic residues" evidence="4">
    <location>
        <begin position="1"/>
        <end position="13"/>
    </location>
</feature>
<feature type="compositionally biased region" description="Basic and acidic residues" evidence="4">
    <location>
        <begin position="20"/>
        <end position="43"/>
    </location>
</feature>
<feature type="compositionally biased region" description="Low complexity" evidence="4">
    <location>
        <begin position="82"/>
        <end position="91"/>
    </location>
</feature>
<feature type="compositionally biased region" description="Basic and acidic residues" evidence="4">
    <location>
        <begin position="164"/>
        <end position="188"/>
    </location>
</feature>
<feature type="modified residue" description="N-acetylserine" evidence="2">
    <location>
        <position position="2"/>
    </location>
</feature>
<feature type="modified residue" description="Diphosphoserine" evidence="1">
    <location>
        <position position="51"/>
    </location>
</feature>
<feature type="modified residue" description="Phosphoserine" evidence="2">
    <location>
        <position position="51"/>
    </location>
</feature>
<feature type="modified residue" description="Phosphoserine" evidence="3">
    <location>
        <position position="84"/>
    </location>
</feature>
<feature type="modified residue" description="Phosphothreonine" evidence="2">
    <location>
        <position position="89"/>
    </location>
</feature>
<feature type="modified residue" description="Phosphoserine" evidence="2">
    <location>
        <position position="91"/>
    </location>
</feature>
<feature type="modified residue" description="Phosphoserine" evidence="2">
    <location>
        <position position="95"/>
    </location>
</feature>
<feature type="modified residue" description="Phosphoserine" evidence="2">
    <location>
        <position position="98"/>
    </location>
</feature>
<sequence length="612" mass="68377">MSDKSELKAELERKKQRLAQIREGKKRKEEERKKKETDQKKEAVAPVQEESDLEKKRREAEALLQSMGLTAESPIVPPPMSPSSKSVSTPSEAGSQDSGDGAVGSRRGPIKLGMAKITQVDFPPREIVTYTKETQTPVMAQPKEDEEEEDDVVTPKPPIEPEEEKTLKKDEESDSKAPPHELTEEEKQQILHSEEFLSFFDHSTRIVERALSEQINIFFDYSGRDLEDKEGEIQAGAKLSLNRQFFDERWSKHRVVSCLDWSSQYPELLVASYNNNEDAPHEPDGVALVWNMKYKKTTPEYVFHCQSAVMSATFAKFHPNLVVGGTYSGQIVLWDNRSNKRTPVQRTPLSAAAHTHPVYCVNVVGTQNAHNLISISTDGKICSWSLDMLSHPQDSMELVHKQSKAVAVTSMSFPVGDVNNFVVGSEEGSVYTACRHGSKAGISEMFEGHQGPITGIHCHSAVGAVDFSHLFVTSSFDWTVKLWTTKNNKPLYSFEDNSDYVYDVMWSPTHPALFACVDGMGRLDLWNLNNDTEVPTASISVEGNPALNRVRWTHSGREIAVGDSEGQIVIYDVGEQIAVPRNDEWARFGRTLAEINANRADAEEEAATRIPA</sequence>
<protein>
    <recommendedName>
        <fullName>Cytoplasmic dynein 1 intermediate chain 2</fullName>
    </recommendedName>
    <alternativeName>
        <fullName>Cytoplasmic dynein intermediate chain 2</fullName>
    </alternativeName>
    <alternativeName>
        <fullName>Dynein intermediate chain 2, cytosolic</fullName>
        <shortName>DH IC-2</shortName>
    </alternativeName>
</protein>
<accession>Q0III3</accession>